<sequence length="528" mass="57028">MSKQILYQDDARKALEKGMDILTEAVSVTLGPKGRNVVLEKKFGAPQIINDGVTIAKEISLENHIENTGVALIRQAASKTNDVAGDGTTTATVLASAIVKQGMRNVAAGSNPMAIKKGIEKATNFVVSKIAEYAKPVEDTKAIIQVASLSSGNDIEVGKMIANAIEKVGREGVISLEEGKSTNTILEITEGMQFEKGFISPYFVTDTERMEVLQENPFILFTDKKITLVQQELVPLLEQIAKTSRPLLIIAEDIEKEALATIVVNKLRGILNVVAVRAPGFGDRRKSLLEDMSILTNGQVITEDAGLSLDTVQLDMLGKARRVIVTKDSTTIIADGHEIKVKSRCEQIKRQIETSDSLYEREKLQERLAKLSGGVAVIKVGAATETEMKDKKLRLGDAINATKAAIEEGIVPGGGATNVHISSELFTWAKNNLVEDELIGALIVERAVTYPLRRIAFNAGDNGAVIVEKVKSHDFHIGYDAANGNIVNMYDRGIIDPAKVARSALQNAASIAAMVLTTECIVVDKVDD</sequence>
<keyword id="KW-0067">ATP-binding</keyword>
<keyword id="KW-0143">Chaperone</keyword>
<keyword id="KW-0150">Chloroplast</keyword>
<keyword id="KW-0413">Isomerase</keyword>
<keyword id="KW-0547">Nucleotide-binding</keyword>
<keyword id="KW-0934">Plastid</keyword>
<gene>
    <name evidence="1" type="primary">groEL</name>
    <name evidence="1" type="synonym">groL</name>
</gene>
<comment type="function">
    <text evidence="1">Together with its co-chaperonin GroES, plays an essential role in assisting protein folding. The GroEL-GroES system forms a nano-cage that allows encapsulation of the non-native substrate proteins and provides a physical environment optimized to promote and accelerate protein folding.</text>
</comment>
<comment type="catalytic activity">
    <reaction evidence="1">
        <text>ATP + H2O + a folded polypeptide = ADP + phosphate + an unfolded polypeptide.</text>
        <dbReference type="EC" id="5.6.1.7"/>
    </reaction>
</comment>
<comment type="subunit">
    <text evidence="1">Forms a cylinder of 14 subunits composed of two heptameric rings stacked back-to-back. Interacts with the co-chaperonin GroES.</text>
</comment>
<comment type="subcellular location">
    <subcellularLocation>
        <location evidence="1">Plastid</location>
        <location evidence="1">Chloroplast</location>
    </subcellularLocation>
</comment>
<comment type="similarity">
    <text evidence="1">Belongs to the chaperonin (HSP60) family.</text>
</comment>
<comment type="sequence caution" evidence="2">
    <conflict type="frameshift">
        <sequence resource="EMBL-CDS" id="BAE92473"/>
    </conflict>
</comment>
<geneLocation type="chloroplast"/>
<dbReference type="EC" id="5.6.1.7" evidence="1"/>
<dbReference type="EMBL" id="AP006715">
    <property type="protein sequence ID" value="BAE92473.1"/>
    <property type="status" value="ALT_FRAME"/>
    <property type="molecule type" value="Genomic_DNA"/>
</dbReference>
<dbReference type="RefSeq" id="YP_537030.1">
    <property type="nucleotide sequence ID" value="NC_007932.1"/>
</dbReference>
<dbReference type="SMR" id="Q1XDD8"/>
<dbReference type="GeneID" id="3978888"/>
<dbReference type="GO" id="GO:0009507">
    <property type="term" value="C:chloroplast"/>
    <property type="evidence" value="ECO:0007669"/>
    <property type="project" value="UniProtKB-SubCell"/>
</dbReference>
<dbReference type="GO" id="GO:0005524">
    <property type="term" value="F:ATP binding"/>
    <property type="evidence" value="ECO:0007669"/>
    <property type="project" value="UniProtKB-UniRule"/>
</dbReference>
<dbReference type="GO" id="GO:0140662">
    <property type="term" value="F:ATP-dependent protein folding chaperone"/>
    <property type="evidence" value="ECO:0007669"/>
    <property type="project" value="InterPro"/>
</dbReference>
<dbReference type="GO" id="GO:0016853">
    <property type="term" value="F:isomerase activity"/>
    <property type="evidence" value="ECO:0007669"/>
    <property type="project" value="UniProtKB-KW"/>
</dbReference>
<dbReference type="GO" id="GO:0051082">
    <property type="term" value="F:unfolded protein binding"/>
    <property type="evidence" value="ECO:0007669"/>
    <property type="project" value="UniProtKB-UniRule"/>
</dbReference>
<dbReference type="GO" id="GO:0042026">
    <property type="term" value="P:protein refolding"/>
    <property type="evidence" value="ECO:0007669"/>
    <property type="project" value="UniProtKB-UniRule"/>
</dbReference>
<dbReference type="CDD" id="cd03344">
    <property type="entry name" value="GroEL"/>
    <property type="match status" value="1"/>
</dbReference>
<dbReference type="FunFam" id="3.50.7.10:FF:000001">
    <property type="entry name" value="60 kDa chaperonin"/>
    <property type="match status" value="1"/>
</dbReference>
<dbReference type="Gene3D" id="3.50.7.10">
    <property type="entry name" value="GroEL"/>
    <property type="match status" value="1"/>
</dbReference>
<dbReference type="Gene3D" id="1.10.560.10">
    <property type="entry name" value="GroEL-like equatorial domain"/>
    <property type="match status" value="1"/>
</dbReference>
<dbReference type="Gene3D" id="3.30.260.10">
    <property type="entry name" value="TCP-1-like chaperonin intermediate domain"/>
    <property type="match status" value="1"/>
</dbReference>
<dbReference type="HAMAP" id="MF_00600">
    <property type="entry name" value="CH60"/>
    <property type="match status" value="1"/>
</dbReference>
<dbReference type="InterPro" id="IPR018370">
    <property type="entry name" value="Chaperonin_Cpn60_CS"/>
</dbReference>
<dbReference type="InterPro" id="IPR001844">
    <property type="entry name" value="Cpn60/GroEL"/>
</dbReference>
<dbReference type="InterPro" id="IPR002423">
    <property type="entry name" value="Cpn60/GroEL/TCP-1"/>
</dbReference>
<dbReference type="InterPro" id="IPR027409">
    <property type="entry name" value="GroEL-like_apical_dom_sf"/>
</dbReference>
<dbReference type="InterPro" id="IPR027413">
    <property type="entry name" value="GROEL-like_equatorial_sf"/>
</dbReference>
<dbReference type="InterPro" id="IPR027410">
    <property type="entry name" value="TCP-1-like_intermed_sf"/>
</dbReference>
<dbReference type="NCBIfam" id="TIGR02348">
    <property type="entry name" value="GroEL"/>
    <property type="match status" value="1"/>
</dbReference>
<dbReference type="NCBIfam" id="NF000592">
    <property type="entry name" value="PRK00013.1"/>
    <property type="match status" value="1"/>
</dbReference>
<dbReference type="NCBIfam" id="NF009487">
    <property type="entry name" value="PRK12849.1"/>
    <property type="match status" value="1"/>
</dbReference>
<dbReference type="NCBIfam" id="NF009488">
    <property type="entry name" value="PRK12850.1"/>
    <property type="match status" value="1"/>
</dbReference>
<dbReference type="NCBIfam" id="NF009489">
    <property type="entry name" value="PRK12851.1"/>
    <property type="match status" value="1"/>
</dbReference>
<dbReference type="PANTHER" id="PTHR45633">
    <property type="entry name" value="60 KDA HEAT SHOCK PROTEIN, MITOCHONDRIAL"/>
    <property type="match status" value="1"/>
</dbReference>
<dbReference type="Pfam" id="PF00118">
    <property type="entry name" value="Cpn60_TCP1"/>
    <property type="match status" value="1"/>
</dbReference>
<dbReference type="PRINTS" id="PR00298">
    <property type="entry name" value="CHAPERONIN60"/>
</dbReference>
<dbReference type="SUPFAM" id="SSF52029">
    <property type="entry name" value="GroEL apical domain-like"/>
    <property type="match status" value="1"/>
</dbReference>
<dbReference type="SUPFAM" id="SSF48592">
    <property type="entry name" value="GroEL equatorial domain-like"/>
    <property type="match status" value="2"/>
</dbReference>
<dbReference type="PROSITE" id="PS00296">
    <property type="entry name" value="CHAPERONINS_CPN60"/>
    <property type="match status" value="1"/>
</dbReference>
<protein>
    <recommendedName>
        <fullName evidence="1">Chaperonin GroEL, chloroplastic</fullName>
        <ecNumber evidence="1">5.6.1.7</ecNumber>
    </recommendedName>
    <alternativeName>
        <fullName evidence="1">60 kDa chaperonin</fullName>
    </alternativeName>
    <alternativeName>
        <fullName evidence="1">Chaperonin-60</fullName>
        <shortName evidence="1">Cpn60</shortName>
    </alternativeName>
</protein>
<accession>Q1XDD8</accession>
<evidence type="ECO:0000255" key="1">
    <source>
        <dbReference type="HAMAP-Rule" id="MF_00600"/>
    </source>
</evidence>
<evidence type="ECO:0000305" key="2"/>
<name>CH60_PYRYE</name>
<feature type="chain" id="PRO_0000277312" description="Chaperonin GroEL, chloroplastic">
    <location>
        <begin position="1"/>
        <end position="528"/>
    </location>
</feature>
<feature type="binding site" evidence="1">
    <location>
        <begin position="29"/>
        <end position="32"/>
    </location>
    <ligand>
        <name>ATP</name>
        <dbReference type="ChEBI" id="CHEBI:30616"/>
    </ligand>
</feature>
<feature type="binding site" evidence="1">
    <location>
        <begin position="86"/>
        <end position="90"/>
    </location>
    <ligand>
        <name>ATP</name>
        <dbReference type="ChEBI" id="CHEBI:30616"/>
    </ligand>
</feature>
<feature type="binding site" evidence="1">
    <location>
        <position position="414"/>
    </location>
    <ligand>
        <name>ATP</name>
        <dbReference type="ChEBI" id="CHEBI:30616"/>
    </ligand>
</feature>
<feature type="binding site" evidence="1">
    <location>
        <begin position="480"/>
        <end position="482"/>
    </location>
    <ligand>
        <name>ATP</name>
        <dbReference type="ChEBI" id="CHEBI:30616"/>
    </ligand>
</feature>
<feature type="binding site" evidence="1">
    <location>
        <position position="496"/>
    </location>
    <ligand>
        <name>ATP</name>
        <dbReference type="ChEBI" id="CHEBI:30616"/>
    </ligand>
</feature>
<proteinExistence type="inferred from homology"/>
<organism>
    <name type="scientific">Pyropia yezoensis</name>
    <name type="common">Susabi-nori</name>
    <name type="synonym">Porphyra yezoensis</name>
    <dbReference type="NCBI Taxonomy" id="2788"/>
    <lineage>
        <taxon>Eukaryota</taxon>
        <taxon>Rhodophyta</taxon>
        <taxon>Bangiophyceae</taxon>
        <taxon>Bangiales</taxon>
        <taxon>Bangiaceae</taxon>
        <taxon>Pyropia</taxon>
    </lineage>
</organism>
<reference key="1">
    <citation type="submission" date="2003-11" db="EMBL/GenBank/DDBJ databases">
        <title>Whole genome sequence of Porphyra yezoensis chloroplast.</title>
        <authorList>
            <person name="Kunimoto M."/>
            <person name="Morishima K."/>
            <person name="Yoshikawa M."/>
            <person name="Fukuda S."/>
            <person name="Kobayashi T."/>
            <person name="Kobayashi M."/>
            <person name="Okazaki T."/>
            <person name="Ohara I."/>
            <person name="Nakayama I."/>
        </authorList>
    </citation>
    <scope>NUCLEOTIDE SEQUENCE [LARGE SCALE GENOMIC DNA]</scope>
    <source>
        <strain>U-51</strain>
    </source>
</reference>